<dbReference type="EC" id="3.5.4.19" evidence="1"/>
<dbReference type="EC" id="3.6.1.31" evidence="1"/>
<dbReference type="EMBL" id="BX571864">
    <property type="protein sequence ID" value="CAE13857.1"/>
    <property type="molecule type" value="Genomic_DNA"/>
</dbReference>
<dbReference type="RefSeq" id="WP_011145861.1">
    <property type="nucleotide sequence ID" value="NC_005126.1"/>
</dbReference>
<dbReference type="SMR" id="Q7N6I6"/>
<dbReference type="STRING" id="243265.plu1564"/>
<dbReference type="GeneID" id="48847851"/>
<dbReference type="KEGG" id="plu:plu1564"/>
<dbReference type="eggNOG" id="COG0139">
    <property type="taxonomic scope" value="Bacteria"/>
</dbReference>
<dbReference type="eggNOG" id="COG0140">
    <property type="taxonomic scope" value="Bacteria"/>
</dbReference>
<dbReference type="HOGENOM" id="CLU_048577_3_1_6"/>
<dbReference type="OrthoDB" id="9795769at2"/>
<dbReference type="UniPathway" id="UPA00031">
    <property type="reaction ID" value="UER00007"/>
</dbReference>
<dbReference type="UniPathway" id="UPA00031">
    <property type="reaction ID" value="UER00008"/>
</dbReference>
<dbReference type="Proteomes" id="UP000002514">
    <property type="component" value="Chromosome"/>
</dbReference>
<dbReference type="GO" id="GO:0005737">
    <property type="term" value="C:cytoplasm"/>
    <property type="evidence" value="ECO:0007669"/>
    <property type="project" value="UniProtKB-SubCell"/>
</dbReference>
<dbReference type="GO" id="GO:0005524">
    <property type="term" value="F:ATP binding"/>
    <property type="evidence" value="ECO:0007669"/>
    <property type="project" value="UniProtKB-KW"/>
</dbReference>
<dbReference type="GO" id="GO:0004635">
    <property type="term" value="F:phosphoribosyl-AMP cyclohydrolase activity"/>
    <property type="evidence" value="ECO:0007669"/>
    <property type="project" value="UniProtKB-UniRule"/>
</dbReference>
<dbReference type="GO" id="GO:0004636">
    <property type="term" value="F:phosphoribosyl-ATP diphosphatase activity"/>
    <property type="evidence" value="ECO:0007669"/>
    <property type="project" value="UniProtKB-UniRule"/>
</dbReference>
<dbReference type="GO" id="GO:0000105">
    <property type="term" value="P:L-histidine biosynthetic process"/>
    <property type="evidence" value="ECO:0007669"/>
    <property type="project" value="UniProtKB-UniRule"/>
</dbReference>
<dbReference type="CDD" id="cd11534">
    <property type="entry name" value="NTP-PPase_HisIE_like"/>
    <property type="match status" value="1"/>
</dbReference>
<dbReference type="FunFam" id="1.10.287.1080:FF:000002">
    <property type="entry name" value="Histidine biosynthesis bifunctional protein HisIE"/>
    <property type="match status" value="1"/>
</dbReference>
<dbReference type="FunFam" id="3.10.20.810:FF:000001">
    <property type="entry name" value="Histidine biosynthesis bifunctional protein HisIE"/>
    <property type="match status" value="1"/>
</dbReference>
<dbReference type="Gene3D" id="1.10.287.1080">
    <property type="entry name" value="MazG-like"/>
    <property type="match status" value="1"/>
</dbReference>
<dbReference type="Gene3D" id="3.10.20.810">
    <property type="entry name" value="Phosphoribosyl-AMP cyclohydrolase"/>
    <property type="match status" value="1"/>
</dbReference>
<dbReference type="HAMAP" id="MF_01020">
    <property type="entry name" value="HisE"/>
    <property type="match status" value="1"/>
</dbReference>
<dbReference type="HAMAP" id="MF_01019">
    <property type="entry name" value="HisIE"/>
    <property type="match status" value="1"/>
</dbReference>
<dbReference type="InterPro" id="IPR023019">
    <property type="entry name" value="His_synth_HisIE"/>
</dbReference>
<dbReference type="InterPro" id="IPR008179">
    <property type="entry name" value="HisE"/>
</dbReference>
<dbReference type="InterPro" id="IPR021130">
    <property type="entry name" value="PRib-ATP_PPHydrolase-like"/>
</dbReference>
<dbReference type="InterPro" id="IPR002496">
    <property type="entry name" value="PRib_AMP_CycHydrolase_dom"/>
</dbReference>
<dbReference type="InterPro" id="IPR038019">
    <property type="entry name" value="PRib_AMP_CycHydrolase_sf"/>
</dbReference>
<dbReference type="NCBIfam" id="TIGR03188">
    <property type="entry name" value="histidine_hisI"/>
    <property type="match status" value="1"/>
</dbReference>
<dbReference type="NCBIfam" id="NF002747">
    <property type="entry name" value="PRK02759.1"/>
    <property type="match status" value="1"/>
</dbReference>
<dbReference type="PANTHER" id="PTHR42945">
    <property type="entry name" value="HISTIDINE BIOSYNTHESIS BIFUNCTIONAL PROTEIN"/>
    <property type="match status" value="1"/>
</dbReference>
<dbReference type="PANTHER" id="PTHR42945:SF9">
    <property type="entry name" value="HISTIDINE BIOSYNTHESIS BIFUNCTIONAL PROTEIN HISIE"/>
    <property type="match status" value="1"/>
</dbReference>
<dbReference type="Pfam" id="PF01502">
    <property type="entry name" value="PRA-CH"/>
    <property type="match status" value="1"/>
</dbReference>
<dbReference type="Pfam" id="PF01503">
    <property type="entry name" value="PRA-PH"/>
    <property type="match status" value="1"/>
</dbReference>
<dbReference type="SUPFAM" id="SSF101386">
    <property type="entry name" value="all-alpha NTP pyrophosphatases"/>
    <property type="match status" value="1"/>
</dbReference>
<dbReference type="SUPFAM" id="SSF141734">
    <property type="entry name" value="HisI-like"/>
    <property type="match status" value="1"/>
</dbReference>
<feature type="chain" id="PRO_0000136421" description="Histidine biosynthesis bifunctional protein HisIE">
    <location>
        <begin position="1"/>
        <end position="201"/>
    </location>
</feature>
<feature type="region of interest" description="Phosphoribosyl-AMP cyclohydrolase">
    <location>
        <begin position="1"/>
        <end position="114"/>
    </location>
</feature>
<feature type="region of interest" description="Phosphoribosyl-ATP pyrophosphohydrolase">
    <location>
        <begin position="115"/>
        <end position="201"/>
    </location>
</feature>
<accession>Q7N6I6</accession>
<comment type="catalytic activity">
    <reaction evidence="1">
        <text>1-(5-phospho-beta-D-ribosyl)-ATP + H2O = 1-(5-phospho-beta-D-ribosyl)-5'-AMP + diphosphate + H(+)</text>
        <dbReference type="Rhea" id="RHEA:22828"/>
        <dbReference type="ChEBI" id="CHEBI:15377"/>
        <dbReference type="ChEBI" id="CHEBI:15378"/>
        <dbReference type="ChEBI" id="CHEBI:33019"/>
        <dbReference type="ChEBI" id="CHEBI:59457"/>
        <dbReference type="ChEBI" id="CHEBI:73183"/>
        <dbReference type="EC" id="3.6.1.31"/>
    </reaction>
</comment>
<comment type="catalytic activity">
    <reaction evidence="1">
        <text>1-(5-phospho-beta-D-ribosyl)-5'-AMP + H2O = 1-(5-phospho-beta-D-ribosyl)-5-[(5-phospho-beta-D-ribosylamino)methylideneamino]imidazole-4-carboxamide</text>
        <dbReference type="Rhea" id="RHEA:20049"/>
        <dbReference type="ChEBI" id="CHEBI:15377"/>
        <dbReference type="ChEBI" id="CHEBI:58435"/>
        <dbReference type="ChEBI" id="CHEBI:59457"/>
        <dbReference type="EC" id="3.5.4.19"/>
    </reaction>
</comment>
<comment type="pathway">
    <text evidence="1">Amino-acid biosynthesis; L-histidine biosynthesis; L-histidine from 5-phospho-alpha-D-ribose 1-diphosphate: step 2/9.</text>
</comment>
<comment type="pathway">
    <text evidence="1">Amino-acid biosynthesis; L-histidine biosynthesis; L-histidine from 5-phospho-alpha-D-ribose 1-diphosphate: step 3/9.</text>
</comment>
<comment type="subcellular location">
    <subcellularLocation>
        <location evidence="1">Cytoplasm</location>
    </subcellularLocation>
</comment>
<comment type="similarity">
    <text evidence="1">In the N-terminal section; belongs to the PRA-CH family.</text>
</comment>
<comment type="similarity">
    <text evidence="1">In the C-terminal section; belongs to the PRA-PH family.</text>
</comment>
<keyword id="KW-0028">Amino-acid biosynthesis</keyword>
<keyword id="KW-0067">ATP-binding</keyword>
<keyword id="KW-0963">Cytoplasm</keyword>
<keyword id="KW-0368">Histidine biosynthesis</keyword>
<keyword id="KW-0378">Hydrolase</keyword>
<keyword id="KW-0511">Multifunctional enzyme</keyword>
<keyword id="KW-0547">Nucleotide-binding</keyword>
<keyword id="KW-1185">Reference proteome</keyword>
<organism>
    <name type="scientific">Photorhabdus laumondii subsp. laumondii (strain DSM 15139 / CIP 105565 / TT01)</name>
    <name type="common">Photorhabdus luminescens subsp. laumondii</name>
    <dbReference type="NCBI Taxonomy" id="243265"/>
    <lineage>
        <taxon>Bacteria</taxon>
        <taxon>Pseudomonadati</taxon>
        <taxon>Pseudomonadota</taxon>
        <taxon>Gammaproteobacteria</taxon>
        <taxon>Enterobacterales</taxon>
        <taxon>Morganellaceae</taxon>
        <taxon>Photorhabdus</taxon>
    </lineage>
</organism>
<reference key="1">
    <citation type="journal article" date="2003" name="Nat. Biotechnol.">
        <title>The genome sequence of the entomopathogenic bacterium Photorhabdus luminescens.</title>
        <authorList>
            <person name="Duchaud E."/>
            <person name="Rusniok C."/>
            <person name="Frangeul L."/>
            <person name="Buchrieser C."/>
            <person name="Givaudan A."/>
            <person name="Taourit S."/>
            <person name="Bocs S."/>
            <person name="Boursaux-Eude C."/>
            <person name="Chandler M."/>
            <person name="Charles J.-F."/>
            <person name="Dassa E."/>
            <person name="Derose R."/>
            <person name="Derzelle S."/>
            <person name="Freyssinet G."/>
            <person name="Gaudriault S."/>
            <person name="Medigue C."/>
            <person name="Lanois A."/>
            <person name="Powell K."/>
            <person name="Siguier P."/>
            <person name="Vincent R."/>
            <person name="Wingate V."/>
            <person name="Zouine M."/>
            <person name="Glaser P."/>
            <person name="Boemare N."/>
            <person name="Danchin A."/>
            <person name="Kunst F."/>
        </authorList>
    </citation>
    <scope>NUCLEOTIDE SEQUENCE [LARGE SCALE GENOMIC DNA]</scope>
    <source>
        <strain>DSM 15139 / CIP 105565 / TT01</strain>
    </source>
</reference>
<proteinExistence type="inferred from homology"/>
<protein>
    <recommendedName>
        <fullName evidence="1">Histidine biosynthesis bifunctional protein HisIE</fullName>
    </recommendedName>
    <domain>
        <recommendedName>
            <fullName evidence="1">Phosphoribosyl-AMP cyclohydrolase</fullName>
            <shortName evidence="1">PRA-CH</shortName>
            <ecNumber evidence="1">3.5.4.19</ecNumber>
        </recommendedName>
    </domain>
    <domain>
        <recommendedName>
            <fullName evidence="1">Phosphoribosyl-ATP pyrophosphatase</fullName>
            <shortName evidence="1">PRA-PH</shortName>
            <ecNumber evidence="1">3.6.1.31</ecNumber>
        </recommendedName>
    </domain>
</protein>
<gene>
    <name evidence="1" type="primary">hisI</name>
    <name evidence="1" type="synonym">hisIE</name>
    <name type="ordered locus">plu1564</name>
</gene>
<evidence type="ECO:0000255" key="1">
    <source>
        <dbReference type="HAMAP-Rule" id="MF_01019"/>
    </source>
</evidence>
<name>HIS2_PHOLL</name>
<sequence length="201" mass="22615">MLTAQQIEKLDWEKVAYMMPVIVQHAISGDVLMMGYMNKEALNITISSGKITFFSRSKQRLWTKGESSGHFLNLVNIYPDCDNDTLLALADPIGPTCHFGTHSCFAPAQTEWGFLYQLEKLLASRKTADPDHSYTAKLYASGTKRIAQKVGEEGLETALAAAVNNREELTNEAADLMYHLMVLLQDQELDLSCVIRRLRER</sequence>